<name>ISCU_PLAF7</name>
<accession>Q8IKT4</accession>
<feature type="chain" id="PRO_0000461958" description="Iron-sulfur cluster assembly protein IscU">
    <location>
        <begin position="1"/>
        <end position="162"/>
    </location>
</feature>
<sequence length="162" mass="18057">MKSKILCNLFKGKSCICLYTNCLNENNVNKCYYNLVRNYSDHVKDHFNKPRNVGSFDKNEKNIGTSIVGKASCGDVIKLQLKIENDVIKDARFMAFGCGSAIASSSYATELIKGKTIDEALKIKNNDIASHLSLPPVKIHCSLLAEDAIKHAIKNYREKVLT</sequence>
<keyword id="KW-0004">4Fe-4S</keyword>
<keyword id="KW-0408">Iron</keyword>
<keyword id="KW-0411">Iron-sulfur</keyword>
<keyword id="KW-0479">Metal-binding</keyword>
<keyword id="KW-0496">Mitochondrion</keyword>
<keyword id="KW-1185">Reference proteome</keyword>
<keyword id="KW-0809">Transit peptide</keyword>
<comment type="function">
    <text evidence="2">Participates in iron-sulfur cluster formation (ISC) pathway for iron-sulfur (Fe-S) cluster biogenesis (PubMed:34032321). Plays a role of a major scaffold protein for [Fe-S] assembly; assembles [4Fe-4S] clusters directly upon interaction with the catalytic component IscS-Isd11 as part of the scaffold complex (PubMed:34032321). Can transfer [4Fe-4S] clusters to target apo-proteins (PubMed:34032321).</text>
</comment>
<comment type="cofactor">
    <cofactor evidence="2">
        <name>[4Fe-4S] cluster</name>
        <dbReference type="ChEBI" id="CHEBI:49883"/>
    </cofactor>
</comment>
<comment type="pathway">
    <text evidence="5">Cofactor biosynthesis; iron-sulfur cluster biosynthesis.</text>
</comment>
<comment type="subunit">
    <text evidence="2 3">Homotrimer (PubMed:34032321). Small proportion is monomeric (PubMed:34032321). Interacts with IscS (PubMed:34032321). Interacts with ABCB6 (PubMed:39348385). Component of a complex, at least composed of IscS, Isd11 and IscU (PubMed:34032321).</text>
</comment>
<comment type="subcellular location">
    <subcellularLocation>
        <location evidence="2">Mitochondrion</location>
    </subcellularLocation>
</comment>
<comment type="similarity">
    <text evidence="1 5">Belongs to the NifU family.</text>
</comment>
<organism evidence="7">
    <name type="scientific">Plasmodium falciparum (isolate 3D7)</name>
    <dbReference type="NCBI Taxonomy" id="36329"/>
    <lineage>
        <taxon>Eukaryota</taxon>
        <taxon>Sar</taxon>
        <taxon>Alveolata</taxon>
        <taxon>Apicomplexa</taxon>
        <taxon>Aconoidasida</taxon>
        <taxon>Haemosporida</taxon>
        <taxon>Plasmodiidae</taxon>
        <taxon>Plasmodium</taxon>
        <taxon>Plasmodium (Laverania)</taxon>
    </lineage>
</organism>
<dbReference type="EMBL" id="LN999946">
    <property type="protein sequence ID" value="CZU00240.1"/>
    <property type="molecule type" value="Genomic_DNA"/>
</dbReference>
<dbReference type="RefSeq" id="XP_001348692.1">
    <property type="nucleotide sequence ID" value="XM_001348656.1"/>
</dbReference>
<dbReference type="SASBDB" id="Q8IKT4"/>
<dbReference type="SMR" id="Q8IKT4"/>
<dbReference type="FunCoup" id="Q8IKT4">
    <property type="interactions" value="194"/>
</dbReference>
<dbReference type="STRING" id="36329.Q8IKT4"/>
<dbReference type="PaxDb" id="5833-PF14_0518"/>
<dbReference type="EnsemblProtists" id="CZU00240">
    <property type="protein sequence ID" value="CZU00240"/>
    <property type="gene ID" value="PF3D7_1454500"/>
</dbReference>
<dbReference type="GeneID" id="812100"/>
<dbReference type="KEGG" id="pfa:PF3D7_1454500"/>
<dbReference type="VEuPathDB" id="PlasmoDB:PF3D7_1454500"/>
<dbReference type="HOGENOM" id="CLU_079283_5_0_1"/>
<dbReference type="InParanoid" id="Q8IKT4"/>
<dbReference type="OMA" id="SMVTEMV"/>
<dbReference type="OrthoDB" id="151610at2759"/>
<dbReference type="PhylomeDB" id="Q8IKT4"/>
<dbReference type="Reactome" id="R-PFA-1362409">
    <property type="pathway name" value="Mitochondrial iron-sulfur cluster biogenesis"/>
</dbReference>
<dbReference type="UniPathway" id="UPA00266"/>
<dbReference type="Proteomes" id="UP000001450">
    <property type="component" value="Chromosome 14"/>
</dbReference>
<dbReference type="GO" id="GO:0005737">
    <property type="term" value="C:cytoplasm"/>
    <property type="evidence" value="ECO:0000318"/>
    <property type="project" value="GO_Central"/>
</dbReference>
<dbReference type="GO" id="GO:0005759">
    <property type="term" value="C:mitochondrial matrix"/>
    <property type="evidence" value="ECO:0000318"/>
    <property type="project" value="GO_Central"/>
</dbReference>
<dbReference type="GO" id="GO:0051537">
    <property type="term" value="F:2 iron, 2 sulfur cluster binding"/>
    <property type="evidence" value="ECO:0000318"/>
    <property type="project" value="GO_Central"/>
</dbReference>
<dbReference type="GO" id="GO:0008198">
    <property type="term" value="F:ferrous iron binding"/>
    <property type="evidence" value="ECO:0000318"/>
    <property type="project" value="GO_Central"/>
</dbReference>
<dbReference type="GO" id="GO:0005506">
    <property type="term" value="F:iron ion binding"/>
    <property type="evidence" value="ECO:0000250"/>
    <property type="project" value="GeneDB"/>
</dbReference>
<dbReference type="GO" id="GO:0006879">
    <property type="term" value="P:intracellular iron ion homeostasis"/>
    <property type="evidence" value="ECO:0000250"/>
    <property type="project" value="GeneDB"/>
</dbReference>
<dbReference type="GO" id="GO:0016226">
    <property type="term" value="P:iron-sulfur cluster assembly"/>
    <property type="evidence" value="ECO:0000250"/>
    <property type="project" value="GeneDB"/>
</dbReference>
<dbReference type="CDD" id="cd06664">
    <property type="entry name" value="IscU_like"/>
    <property type="match status" value="1"/>
</dbReference>
<dbReference type="FunFam" id="3.90.1010.10:FF:000005">
    <property type="entry name" value="Iron-sulfur cluster assembly protein"/>
    <property type="match status" value="1"/>
</dbReference>
<dbReference type="Gene3D" id="3.90.1010.10">
    <property type="match status" value="1"/>
</dbReference>
<dbReference type="InterPro" id="IPR011339">
    <property type="entry name" value="ISCU"/>
</dbReference>
<dbReference type="InterPro" id="IPR002871">
    <property type="entry name" value="NIF_FeS_clus_asmbl_NifU_N"/>
</dbReference>
<dbReference type="NCBIfam" id="TIGR01999">
    <property type="entry name" value="iscU"/>
    <property type="match status" value="1"/>
</dbReference>
<dbReference type="PANTHER" id="PTHR10093">
    <property type="entry name" value="IRON-SULFUR CLUSTER ASSEMBLY ENZYME NIFU HOMOLOG"/>
    <property type="match status" value="1"/>
</dbReference>
<dbReference type="Pfam" id="PF01592">
    <property type="entry name" value="NifU_N"/>
    <property type="match status" value="1"/>
</dbReference>
<dbReference type="SUPFAM" id="SSF82649">
    <property type="entry name" value="SufE/NifU"/>
    <property type="match status" value="1"/>
</dbReference>
<gene>
    <name evidence="5" type="primary">IscU</name>
    <name evidence="6" type="ORF">PF3D7_1454500</name>
</gene>
<reference evidence="7" key="1">
    <citation type="journal article" date="2002" name="Nature">
        <title>Genome sequence of the human malaria parasite Plasmodium falciparum.</title>
        <authorList>
            <person name="Gardner M.J."/>
            <person name="Hall N."/>
            <person name="Fung E."/>
            <person name="White O."/>
            <person name="Berriman M."/>
            <person name="Hyman R.W."/>
            <person name="Carlton J.M."/>
            <person name="Pain A."/>
            <person name="Nelson K.E."/>
            <person name="Bowman S."/>
            <person name="Paulsen I.T."/>
            <person name="James K.D."/>
            <person name="Eisen J.A."/>
            <person name="Rutherford K.M."/>
            <person name="Salzberg S.L."/>
            <person name="Craig A."/>
            <person name="Kyes S."/>
            <person name="Chan M.-S."/>
            <person name="Nene V."/>
            <person name="Shallom S.J."/>
            <person name="Suh B."/>
            <person name="Peterson J."/>
            <person name="Angiuoli S."/>
            <person name="Pertea M."/>
            <person name="Allen J."/>
            <person name="Selengut J."/>
            <person name="Haft D."/>
            <person name="Mather M.W."/>
            <person name="Vaidya A.B."/>
            <person name="Martin D.M.A."/>
            <person name="Fairlamb A.H."/>
            <person name="Fraunholz M.J."/>
            <person name="Roos D.S."/>
            <person name="Ralph S.A."/>
            <person name="McFadden G.I."/>
            <person name="Cummings L.M."/>
            <person name="Subramanian G.M."/>
            <person name="Mungall C."/>
            <person name="Venter J.C."/>
            <person name="Carucci D.J."/>
            <person name="Hoffman S.L."/>
            <person name="Newbold C."/>
            <person name="Davis R.W."/>
            <person name="Fraser C.M."/>
            <person name="Barrell B.G."/>
        </authorList>
    </citation>
    <scope>NUCLEOTIDE SEQUENCE [LARGE SCALE GENOMIC DNA]</scope>
    <source>
        <strain evidence="7">3D7</strain>
    </source>
</reference>
<reference evidence="5" key="2">
    <citation type="journal article" date="2021" name="Mol. Microbiol.">
        <title>[Fe-S] biogenesis and unusual assembly of the ISC scaffold complex in the Plasmodium falciparum mitochondrion.</title>
        <authorList>
            <person name="Sadik M."/>
            <person name="Afsar M."/>
            <person name="Ramachandran R."/>
            <person name="Habib S."/>
        </authorList>
    </citation>
    <scope>FUNCTION</scope>
    <scope>COFACTOR</scope>
    <scope>SUBUNIT</scope>
    <scope>INTERACTION WITH ISCS</scope>
    <scope>SUBCELLULAR LOCATION</scope>
</reference>
<reference evidence="5" key="3">
    <citation type="journal article" date="2024" name="PLoS Pathog.">
        <title>ATM1, an essential conserved transporter in Apicomplexa, bridges mitochondrial and cytosolic [Fe-S] biogenesis.</title>
        <authorList>
            <person name="Shrivastava D."/>
            <person name="Abboud E."/>
            <person name="Ramchandra J.P."/>
            <person name="Jha A."/>
            <person name="Marq J.B."/>
            <person name="Chaurasia A."/>
            <person name="Mitra K."/>
            <person name="Sadik M."/>
            <person name="Siddiqi M.I."/>
            <person name="Soldati-Favre D."/>
            <person name="Kloehn J."/>
            <person name="Habib S."/>
        </authorList>
    </citation>
    <scope>INTERACTION WITH ABCB6</scope>
</reference>
<protein>
    <recommendedName>
        <fullName evidence="5">Iron-sulfur cluster assembly protein IscU</fullName>
        <shortName evidence="4">PfIscU</shortName>
    </recommendedName>
</protein>
<evidence type="ECO:0000255" key="1">
    <source>
        <dbReference type="RuleBase" id="RU362089"/>
    </source>
</evidence>
<evidence type="ECO:0000269" key="2">
    <source>
    </source>
</evidence>
<evidence type="ECO:0000269" key="3">
    <source>
    </source>
</evidence>
<evidence type="ECO:0000303" key="4">
    <source>
    </source>
</evidence>
<evidence type="ECO:0000305" key="5"/>
<evidence type="ECO:0000312" key="6">
    <source>
        <dbReference type="EMBL" id="CZU00240.1"/>
    </source>
</evidence>
<evidence type="ECO:0000312" key="7">
    <source>
        <dbReference type="Proteomes" id="UP000001450"/>
    </source>
</evidence>
<proteinExistence type="evidence at protein level"/>